<evidence type="ECO:0000255" key="1">
    <source>
        <dbReference type="HAMAP-Rule" id="MF_00285"/>
    </source>
</evidence>
<dbReference type="EC" id="7.2.2.6" evidence="1"/>
<dbReference type="EMBL" id="AE010300">
    <property type="protein sequence ID" value="AAN50309.2"/>
    <property type="molecule type" value="Genomic_DNA"/>
</dbReference>
<dbReference type="RefSeq" id="NP_713291.2">
    <property type="nucleotide sequence ID" value="NC_004342.2"/>
</dbReference>
<dbReference type="RefSeq" id="WP_001078552.1">
    <property type="nucleotide sequence ID" value="NC_004342.2"/>
</dbReference>
<dbReference type="SMR" id="P59219"/>
<dbReference type="FunCoup" id="P59219">
    <property type="interactions" value="153"/>
</dbReference>
<dbReference type="STRING" id="189518.LA_3111"/>
<dbReference type="PaxDb" id="189518-LA_3111"/>
<dbReference type="EnsemblBacteria" id="AAN50309">
    <property type="protein sequence ID" value="AAN50309"/>
    <property type="gene ID" value="LA_3111"/>
</dbReference>
<dbReference type="KEGG" id="lil:LA_3111"/>
<dbReference type="PATRIC" id="fig|189518.3.peg.3091"/>
<dbReference type="HOGENOM" id="CLU_025728_2_0_12"/>
<dbReference type="InParanoid" id="P59219"/>
<dbReference type="OrthoDB" id="9760364at2"/>
<dbReference type="Proteomes" id="UP000001408">
    <property type="component" value="Chromosome I"/>
</dbReference>
<dbReference type="GO" id="GO:0005886">
    <property type="term" value="C:plasma membrane"/>
    <property type="evidence" value="ECO:0000318"/>
    <property type="project" value="GO_Central"/>
</dbReference>
<dbReference type="GO" id="GO:0031004">
    <property type="term" value="C:potassium ion-transporting ATPase complex"/>
    <property type="evidence" value="ECO:0000318"/>
    <property type="project" value="GO_Central"/>
</dbReference>
<dbReference type="GO" id="GO:1903103">
    <property type="term" value="C:potassium:proton antiporter complex"/>
    <property type="evidence" value="ECO:0000318"/>
    <property type="project" value="GO_Central"/>
</dbReference>
<dbReference type="GO" id="GO:0005524">
    <property type="term" value="F:ATP binding"/>
    <property type="evidence" value="ECO:0007669"/>
    <property type="project" value="UniProtKB-UniRule"/>
</dbReference>
<dbReference type="GO" id="GO:0016887">
    <property type="term" value="F:ATP hydrolysis activity"/>
    <property type="evidence" value="ECO:0007669"/>
    <property type="project" value="InterPro"/>
</dbReference>
<dbReference type="GO" id="GO:0000287">
    <property type="term" value="F:magnesium ion binding"/>
    <property type="evidence" value="ECO:0007669"/>
    <property type="project" value="UniProtKB-UniRule"/>
</dbReference>
<dbReference type="GO" id="GO:0008556">
    <property type="term" value="F:P-type potassium transmembrane transporter activity"/>
    <property type="evidence" value="ECO:0000318"/>
    <property type="project" value="GO_Central"/>
</dbReference>
<dbReference type="GO" id="GO:0071805">
    <property type="term" value="P:potassium ion transmembrane transport"/>
    <property type="evidence" value="ECO:0000318"/>
    <property type="project" value="GO_Central"/>
</dbReference>
<dbReference type="CDD" id="cd02078">
    <property type="entry name" value="P-type_ATPase_K"/>
    <property type="match status" value="1"/>
</dbReference>
<dbReference type="FunFam" id="2.70.150.10:FF:000033">
    <property type="entry name" value="Potassium-transporting ATPase ATP-binding subunit"/>
    <property type="match status" value="1"/>
</dbReference>
<dbReference type="FunFam" id="3.40.1110.10:FF:000007">
    <property type="entry name" value="Potassium-transporting ATPase ATP-binding subunit"/>
    <property type="match status" value="1"/>
</dbReference>
<dbReference type="Gene3D" id="3.40.1110.10">
    <property type="entry name" value="Calcium-transporting ATPase, cytoplasmic domain N"/>
    <property type="match status" value="1"/>
</dbReference>
<dbReference type="Gene3D" id="2.70.150.10">
    <property type="entry name" value="Calcium-transporting ATPase, cytoplasmic transduction domain A"/>
    <property type="match status" value="1"/>
</dbReference>
<dbReference type="Gene3D" id="3.40.50.1000">
    <property type="entry name" value="HAD superfamily/HAD-like"/>
    <property type="match status" value="1"/>
</dbReference>
<dbReference type="HAMAP" id="MF_00285">
    <property type="entry name" value="KdpB"/>
    <property type="match status" value="1"/>
</dbReference>
<dbReference type="InterPro" id="IPR023299">
    <property type="entry name" value="ATPase_P-typ_cyto_dom_N"/>
</dbReference>
<dbReference type="InterPro" id="IPR018303">
    <property type="entry name" value="ATPase_P-typ_P_site"/>
</dbReference>
<dbReference type="InterPro" id="IPR023298">
    <property type="entry name" value="ATPase_P-typ_TM_dom_sf"/>
</dbReference>
<dbReference type="InterPro" id="IPR008250">
    <property type="entry name" value="ATPase_P-typ_transduc_dom_A_sf"/>
</dbReference>
<dbReference type="InterPro" id="IPR036412">
    <property type="entry name" value="HAD-like_sf"/>
</dbReference>
<dbReference type="InterPro" id="IPR023214">
    <property type="entry name" value="HAD_sf"/>
</dbReference>
<dbReference type="InterPro" id="IPR006391">
    <property type="entry name" value="P-type_ATPase_bsu_IA"/>
</dbReference>
<dbReference type="InterPro" id="IPR001757">
    <property type="entry name" value="P_typ_ATPase"/>
</dbReference>
<dbReference type="InterPro" id="IPR044492">
    <property type="entry name" value="P_typ_ATPase_HD_dom"/>
</dbReference>
<dbReference type="NCBIfam" id="TIGR01494">
    <property type="entry name" value="ATPase_P-type"/>
    <property type="match status" value="2"/>
</dbReference>
<dbReference type="NCBIfam" id="TIGR01497">
    <property type="entry name" value="kdpB"/>
    <property type="match status" value="1"/>
</dbReference>
<dbReference type="PANTHER" id="PTHR43743">
    <property type="entry name" value="POTASSIUM-TRANSPORTING ATPASE ATP-BINDING SUBUNIT"/>
    <property type="match status" value="1"/>
</dbReference>
<dbReference type="PANTHER" id="PTHR43743:SF1">
    <property type="entry name" value="POTASSIUM-TRANSPORTING ATPASE ATP-BINDING SUBUNIT"/>
    <property type="match status" value="1"/>
</dbReference>
<dbReference type="Pfam" id="PF00122">
    <property type="entry name" value="E1-E2_ATPase"/>
    <property type="match status" value="1"/>
</dbReference>
<dbReference type="Pfam" id="PF00702">
    <property type="entry name" value="Hydrolase"/>
    <property type="match status" value="1"/>
</dbReference>
<dbReference type="PRINTS" id="PR00119">
    <property type="entry name" value="CATATPASE"/>
</dbReference>
<dbReference type="SFLD" id="SFLDG00002">
    <property type="entry name" value="C1.7:_P-type_atpase_like"/>
    <property type="match status" value="1"/>
</dbReference>
<dbReference type="SFLD" id="SFLDF00027">
    <property type="entry name" value="p-type_atpase"/>
    <property type="match status" value="1"/>
</dbReference>
<dbReference type="SUPFAM" id="SSF81653">
    <property type="entry name" value="Calcium ATPase, transduction domain A"/>
    <property type="match status" value="1"/>
</dbReference>
<dbReference type="SUPFAM" id="SSF81665">
    <property type="entry name" value="Calcium ATPase, transmembrane domain M"/>
    <property type="match status" value="1"/>
</dbReference>
<dbReference type="SUPFAM" id="SSF56784">
    <property type="entry name" value="HAD-like"/>
    <property type="match status" value="1"/>
</dbReference>
<dbReference type="PROSITE" id="PS00154">
    <property type="entry name" value="ATPASE_E1_E2"/>
    <property type="match status" value="1"/>
</dbReference>
<organism>
    <name type="scientific">Leptospira interrogans serogroup Icterohaemorrhagiae serovar Lai (strain 56601)</name>
    <dbReference type="NCBI Taxonomy" id="189518"/>
    <lineage>
        <taxon>Bacteria</taxon>
        <taxon>Pseudomonadati</taxon>
        <taxon>Spirochaetota</taxon>
        <taxon>Spirochaetia</taxon>
        <taxon>Leptospirales</taxon>
        <taxon>Leptospiraceae</taxon>
        <taxon>Leptospira</taxon>
    </lineage>
</organism>
<comment type="function">
    <text evidence="1">Part of the high-affinity ATP-driven potassium transport (or Kdp) system, which catalyzes the hydrolysis of ATP coupled with the electrogenic transport of potassium into the cytoplasm. This subunit is responsible for energy coupling to the transport system and for the release of the potassium ions to the cytoplasm.</text>
</comment>
<comment type="catalytic activity">
    <reaction evidence="1">
        <text>K(+)(out) + ATP + H2O = K(+)(in) + ADP + phosphate + H(+)</text>
        <dbReference type="Rhea" id="RHEA:16777"/>
        <dbReference type="ChEBI" id="CHEBI:15377"/>
        <dbReference type="ChEBI" id="CHEBI:15378"/>
        <dbReference type="ChEBI" id="CHEBI:29103"/>
        <dbReference type="ChEBI" id="CHEBI:30616"/>
        <dbReference type="ChEBI" id="CHEBI:43474"/>
        <dbReference type="ChEBI" id="CHEBI:456216"/>
        <dbReference type="EC" id="7.2.2.6"/>
    </reaction>
    <physiologicalReaction direction="left-to-right" evidence="1">
        <dbReference type="Rhea" id="RHEA:16778"/>
    </physiologicalReaction>
</comment>
<comment type="subunit">
    <text evidence="1">The system is composed of three essential subunits: KdpA, KdpB and KdpC.</text>
</comment>
<comment type="subcellular location">
    <subcellularLocation>
        <location evidence="1">Cell inner membrane</location>
        <topology evidence="1">Multi-pass membrane protein</topology>
    </subcellularLocation>
</comment>
<comment type="similarity">
    <text evidence="1">Belongs to the cation transport ATPase (P-type) (TC 3.A.3) family. Type IA subfamily.</text>
</comment>
<feature type="chain" id="PRO_0000046120" description="Potassium-transporting ATPase ATP-binding subunit">
    <location>
        <begin position="1"/>
        <end position="692"/>
    </location>
</feature>
<feature type="transmembrane region" description="Helical" evidence="1">
    <location>
        <begin position="35"/>
        <end position="55"/>
    </location>
</feature>
<feature type="transmembrane region" description="Helical" evidence="1">
    <location>
        <begin position="64"/>
        <end position="84"/>
    </location>
</feature>
<feature type="transmembrane region" description="Helical" evidence="1">
    <location>
        <begin position="213"/>
        <end position="233"/>
    </location>
</feature>
<feature type="transmembrane region" description="Helical" evidence="1">
    <location>
        <begin position="254"/>
        <end position="274"/>
    </location>
</feature>
<feature type="transmembrane region" description="Helical" evidence="1">
    <location>
        <begin position="592"/>
        <end position="612"/>
    </location>
</feature>
<feature type="transmembrane region" description="Helical" evidence="1">
    <location>
        <begin position="626"/>
        <end position="646"/>
    </location>
</feature>
<feature type="transmembrane region" description="Helical" evidence="1">
    <location>
        <begin position="672"/>
        <end position="692"/>
    </location>
</feature>
<feature type="active site" description="4-aspartylphosphate intermediate" evidence="1">
    <location>
        <position position="307"/>
    </location>
</feature>
<feature type="binding site" evidence="1">
    <location>
        <position position="344"/>
    </location>
    <ligand>
        <name>ATP</name>
        <dbReference type="ChEBI" id="CHEBI:30616"/>
    </ligand>
</feature>
<feature type="binding site" evidence="1">
    <location>
        <position position="348"/>
    </location>
    <ligand>
        <name>ATP</name>
        <dbReference type="ChEBI" id="CHEBI:30616"/>
    </ligand>
</feature>
<feature type="binding site" evidence="1">
    <location>
        <begin position="377"/>
        <end position="384"/>
    </location>
    <ligand>
        <name>ATP</name>
        <dbReference type="ChEBI" id="CHEBI:30616"/>
    </ligand>
</feature>
<feature type="binding site" evidence="1">
    <location>
        <position position="400"/>
    </location>
    <ligand>
        <name>ATP</name>
        <dbReference type="ChEBI" id="CHEBI:30616"/>
    </ligand>
</feature>
<feature type="binding site" evidence="1">
    <location>
        <position position="523"/>
    </location>
    <ligand>
        <name>Mg(2+)</name>
        <dbReference type="ChEBI" id="CHEBI:18420"/>
    </ligand>
</feature>
<feature type="binding site" evidence="1">
    <location>
        <position position="527"/>
    </location>
    <ligand>
        <name>Mg(2+)</name>
        <dbReference type="ChEBI" id="CHEBI:18420"/>
    </ligand>
</feature>
<proteinExistence type="inferred from homology"/>
<protein>
    <recommendedName>
        <fullName evidence="1">Potassium-transporting ATPase ATP-binding subunit</fullName>
        <ecNumber evidence="1">7.2.2.6</ecNumber>
    </recommendedName>
    <alternativeName>
        <fullName evidence="1">ATP phosphohydrolase [potassium-transporting] B chain</fullName>
    </alternativeName>
    <alternativeName>
        <fullName evidence="1">Potassium-binding and translocating subunit B</fullName>
    </alternativeName>
    <alternativeName>
        <fullName evidence="1">Potassium-translocating ATPase B chain</fullName>
    </alternativeName>
</protein>
<name>KDPB_LEPIN</name>
<keyword id="KW-0067">ATP-binding</keyword>
<keyword id="KW-0997">Cell inner membrane</keyword>
<keyword id="KW-1003">Cell membrane</keyword>
<keyword id="KW-0406">Ion transport</keyword>
<keyword id="KW-0460">Magnesium</keyword>
<keyword id="KW-0472">Membrane</keyword>
<keyword id="KW-0479">Metal-binding</keyword>
<keyword id="KW-0547">Nucleotide-binding</keyword>
<keyword id="KW-0597">Phosphoprotein</keyword>
<keyword id="KW-0630">Potassium</keyword>
<keyword id="KW-0633">Potassium transport</keyword>
<keyword id="KW-1185">Reference proteome</keyword>
<keyword id="KW-1278">Translocase</keyword>
<keyword id="KW-0812">Transmembrane</keyword>
<keyword id="KW-1133">Transmembrane helix</keyword>
<keyword id="KW-0813">Transport</keyword>
<gene>
    <name evidence="1" type="primary">kdpB</name>
    <name type="ordered locus">LA_3107</name>
</gene>
<sequence>MNRESKVFIESPILKEAILNTFKKLHPFLQAKNPVMFIVFLGALFTTWIFFKDLYYGVYSSFNLQISLWLWFTVLFANFAEAIAEGRGKARTDSLKKTRSNIIAKKLVGNKIENVPGTLLKIGDIVICEAGDLIPGDGEILEGIASVDESAITGESAPVVRESGGDRSAVTGGTKVLSDRIKISITAEQGRTFLDQMIALVEGAKRQKTPNEIALTMLLSGLSFIFLIAVMSLPLFAEFVAKEGGQSANLSIPILISLLVCLIPTTIAGLLSAIGISGMERLIRFNVISKSGRAIEAAGDIDILLLDKTGTITLGNREARDFYPAKGVDEKYLADVAQLSSLADETPEGRSIVILAKDKFGIRERNLSEMEGEFIPFSASTKMSGVNLKKEGKVVRKIRKGAGDSIRNYLHTLGQKISAELEETIQTISQRGSTPILITEEDRLLGVIELKDIVKGGLKERFASLRKMGIRTVMITGDNPLTAAAIAAEAGVDDFLAEATPETKLKKIREQQAKGYLVAMIGDGTNDAPALAQSDVGVAMNTGTQTAREAGNMIDLDSNPSKLIEIVEIGKQLLMTRGALTTFSIANDVAKYFAILPALFGSFYAVSEVGPLSALNLMKLGSQKSAVLSAVIFNALVIPALIPLALRGIVYKPLGADRILKRNLLIFGLGGMVIPFLGIKCIDLMLGFLGII</sequence>
<reference key="1">
    <citation type="journal article" date="2003" name="Nature">
        <title>Unique physiological and pathogenic features of Leptospira interrogans revealed by whole-genome sequencing.</title>
        <authorList>
            <person name="Ren S.-X."/>
            <person name="Fu G."/>
            <person name="Jiang X.-G."/>
            <person name="Zeng R."/>
            <person name="Miao Y.-G."/>
            <person name="Xu H."/>
            <person name="Zhang Y.-X."/>
            <person name="Xiong H."/>
            <person name="Lu G."/>
            <person name="Lu L.-F."/>
            <person name="Jiang H.-Q."/>
            <person name="Jia J."/>
            <person name="Tu Y.-F."/>
            <person name="Jiang J.-X."/>
            <person name="Gu W.-Y."/>
            <person name="Zhang Y.-Q."/>
            <person name="Cai Z."/>
            <person name="Sheng H.-H."/>
            <person name="Yin H.-F."/>
            <person name="Zhang Y."/>
            <person name="Zhu G.-F."/>
            <person name="Wan M."/>
            <person name="Huang H.-L."/>
            <person name="Qian Z."/>
            <person name="Wang S.-Y."/>
            <person name="Ma W."/>
            <person name="Yao Z.-J."/>
            <person name="Shen Y."/>
            <person name="Qiang B.-Q."/>
            <person name="Xia Q.-C."/>
            <person name="Guo X.-K."/>
            <person name="Danchin A."/>
            <person name="Saint Girons I."/>
            <person name="Somerville R.L."/>
            <person name="Wen Y.-M."/>
            <person name="Shi M.-H."/>
            <person name="Chen Z."/>
            <person name="Xu J.-G."/>
            <person name="Zhao G.-P."/>
        </authorList>
    </citation>
    <scope>NUCLEOTIDE SEQUENCE [LARGE SCALE GENOMIC DNA]</scope>
    <source>
        <strain>56601</strain>
    </source>
</reference>
<reference key="2">
    <citation type="submission" date="2010-04" db="EMBL/GenBank/DDBJ databases">
        <authorList>
            <person name="Zhong Y."/>
            <person name="Zheng H.-J."/>
            <person name="Wang S.-Y."/>
            <person name="Guo X.-K."/>
            <person name="Zhao G.-P."/>
        </authorList>
    </citation>
    <scope>SEQUENCE REVISION TO C-TERMINUS</scope>
</reference>
<accession>P59219</accession>